<dbReference type="EC" id="1.97.1.12" evidence="2"/>
<dbReference type="EMBL" id="AY780259">
    <property type="protein sequence ID" value="AAX21079.1"/>
    <property type="molecule type" value="Genomic_DNA"/>
</dbReference>
<dbReference type="RefSeq" id="YP_636350.1">
    <property type="nucleotide sequence ID" value="NC_008115.1"/>
</dbReference>
<dbReference type="SMR" id="Q49KU7"/>
<dbReference type="GeneID" id="4108382"/>
<dbReference type="GO" id="GO:0009535">
    <property type="term" value="C:chloroplast thylakoid membrane"/>
    <property type="evidence" value="ECO:0007669"/>
    <property type="project" value="UniProtKB-SubCell"/>
</dbReference>
<dbReference type="GO" id="GO:0009522">
    <property type="term" value="C:photosystem I"/>
    <property type="evidence" value="ECO:0007669"/>
    <property type="project" value="UniProtKB-KW"/>
</dbReference>
<dbReference type="GO" id="GO:0051539">
    <property type="term" value="F:4 iron, 4 sulfur cluster binding"/>
    <property type="evidence" value="ECO:0007669"/>
    <property type="project" value="UniProtKB-KW"/>
</dbReference>
<dbReference type="GO" id="GO:0009055">
    <property type="term" value="F:electron transfer activity"/>
    <property type="evidence" value="ECO:0007669"/>
    <property type="project" value="UniProtKB-UniRule"/>
</dbReference>
<dbReference type="GO" id="GO:0046872">
    <property type="term" value="F:metal ion binding"/>
    <property type="evidence" value="ECO:0007669"/>
    <property type="project" value="UniProtKB-KW"/>
</dbReference>
<dbReference type="GO" id="GO:0016491">
    <property type="term" value="F:oxidoreductase activity"/>
    <property type="evidence" value="ECO:0007669"/>
    <property type="project" value="UniProtKB-KW"/>
</dbReference>
<dbReference type="GO" id="GO:0009773">
    <property type="term" value="P:photosynthetic electron transport in photosystem I"/>
    <property type="evidence" value="ECO:0007669"/>
    <property type="project" value="InterPro"/>
</dbReference>
<dbReference type="FunFam" id="3.30.70.20:FF:000001">
    <property type="entry name" value="Photosystem I iron-sulfur center"/>
    <property type="match status" value="1"/>
</dbReference>
<dbReference type="Gene3D" id="3.30.70.20">
    <property type="match status" value="1"/>
</dbReference>
<dbReference type="HAMAP" id="MF_01303">
    <property type="entry name" value="PSI_PsaC"/>
    <property type="match status" value="1"/>
</dbReference>
<dbReference type="InterPro" id="IPR017896">
    <property type="entry name" value="4Fe4S_Fe-S-bd"/>
</dbReference>
<dbReference type="InterPro" id="IPR017900">
    <property type="entry name" value="4Fe4S_Fe_S_CS"/>
</dbReference>
<dbReference type="InterPro" id="IPR050157">
    <property type="entry name" value="PSI_iron-sulfur_center"/>
</dbReference>
<dbReference type="InterPro" id="IPR017491">
    <property type="entry name" value="PSI_PsaC"/>
</dbReference>
<dbReference type="NCBIfam" id="TIGR03048">
    <property type="entry name" value="PS_I_psaC"/>
    <property type="match status" value="1"/>
</dbReference>
<dbReference type="PANTHER" id="PTHR24960:SF79">
    <property type="entry name" value="PHOTOSYSTEM I IRON-SULFUR CENTER"/>
    <property type="match status" value="1"/>
</dbReference>
<dbReference type="PANTHER" id="PTHR24960">
    <property type="entry name" value="PHOTOSYSTEM I IRON-SULFUR CENTER-RELATED"/>
    <property type="match status" value="1"/>
</dbReference>
<dbReference type="Pfam" id="PF14697">
    <property type="entry name" value="Fer4_21"/>
    <property type="match status" value="1"/>
</dbReference>
<dbReference type="SUPFAM" id="SSF54862">
    <property type="entry name" value="4Fe-4S ferredoxins"/>
    <property type="match status" value="1"/>
</dbReference>
<dbReference type="PROSITE" id="PS00198">
    <property type="entry name" value="4FE4S_FER_1"/>
    <property type="match status" value="2"/>
</dbReference>
<dbReference type="PROSITE" id="PS51379">
    <property type="entry name" value="4FE4S_FER_2"/>
    <property type="match status" value="2"/>
</dbReference>
<keyword id="KW-0004">4Fe-4S</keyword>
<keyword id="KW-0150">Chloroplast</keyword>
<keyword id="KW-0249">Electron transport</keyword>
<keyword id="KW-0408">Iron</keyword>
<keyword id="KW-0411">Iron-sulfur</keyword>
<keyword id="KW-0472">Membrane</keyword>
<keyword id="KW-0479">Metal-binding</keyword>
<keyword id="KW-0560">Oxidoreductase</keyword>
<keyword id="KW-0602">Photosynthesis</keyword>
<keyword id="KW-0603">Photosystem I</keyword>
<keyword id="KW-0934">Plastid</keyword>
<keyword id="KW-0677">Repeat</keyword>
<keyword id="KW-0793">Thylakoid</keyword>
<keyword id="KW-0813">Transport</keyword>
<evidence type="ECO:0000250" key="1"/>
<evidence type="ECO:0000255" key="2">
    <source>
        <dbReference type="HAMAP-Rule" id="MF_01303"/>
    </source>
</evidence>
<name>PSAC_EUCGG</name>
<reference key="1">
    <citation type="journal article" date="2005" name="DNA Res.">
        <title>Complete nucleotide sequence of the chloroplast genome from the Tasmanian blue gum, Eucalyptus globulus (Myrtaceae).</title>
        <authorList>
            <person name="Steane D.A."/>
        </authorList>
    </citation>
    <scope>NUCLEOTIDE SEQUENCE [LARGE SCALE GENOMIC DNA]</scope>
</reference>
<geneLocation type="chloroplast"/>
<comment type="function">
    <text evidence="2">Apoprotein for the two 4Fe-4S centers FA and FB of photosystem I (PSI); essential for photochemical activity. FB is the terminal electron acceptor of PSI, donating electrons to ferredoxin. The C-terminus interacts with PsaA/B/D and helps assemble the protein into the PSI complex. Required for binding of PsaD and PsaE to PSI. PSI is a plastocyanin-ferredoxin oxidoreductase, converting photonic excitation into a charge separation, which transfers an electron from the donor P700 chlorophyll pair to the spectroscopically characterized acceptors A0, A1, FX, FA and FB in turn.</text>
</comment>
<comment type="catalytic activity">
    <reaction evidence="2">
        <text>reduced [plastocyanin] + hnu + oxidized [2Fe-2S]-[ferredoxin] = oxidized [plastocyanin] + reduced [2Fe-2S]-[ferredoxin]</text>
        <dbReference type="Rhea" id="RHEA:30407"/>
        <dbReference type="Rhea" id="RHEA-COMP:10000"/>
        <dbReference type="Rhea" id="RHEA-COMP:10001"/>
        <dbReference type="Rhea" id="RHEA-COMP:10039"/>
        <dbReference type="Rhea" id="RHEA-COMP:10040"/>
        <dbReference type="ChEBI" id="CHEBI:29036"/>
        <dbReference type="ChEBI" id="CHEBI:30212"/>
        <dbReference type="ChEBI" id="CHEBI:33737"/>
        <dbReference type="ChEBI" id="CHEBI:33738"/>
        <dbReference type="ChEBI" id="CHEBI:49552"/>
        <dbReference type="EC" id="1.97.1.12"/>
    </reaction>
</comment>
<comment type="cofactor">
    <cofactor evidence="2">
        <name>[4Fe-4S] cluster</name>
        <dbReference type="ChEBI" id="CHEBI:49883"/>
    </cofactor>
    <text evidence="2">Binds 2 [4Fe-4S] clusters. Cluster 2 is most probably the spectroscopically characterized electron acceptor FA and cluster 1 is most probably FB.</text>
</comment>
<comment type="subunit">
    <text evidence="2">The eukaryotic PSI reaction center is composed of at least 11 subunits.</text>
</comment>
<comment type="subcellular location">
    <subcellularLocation>
        <location evidence="2">Plastid</location>
        <location evidence="2">Chloroplast thylakoid membrane</location>
        <topology evidence="2">Peripheral membrane protein</topology>
        <orientation evidence="2">Stromal side</orientation>
    </subcellularLocation>
</comment>
<feature type="initiator methionine" description="Removed" evidence="1">
    <location>
        <position position="1"/>
    </location>
</feature>
<feature type="chain" id="PRO_0000275980" description="Photosystem I iron-sulfur center">
    <location>
        <begin position="2"/>
        <end position="81"/>
    </location>
</feature>
<feature type="domain" description="4Fe-4S ferredoxin-type 1" evidence="2">
    <location>
        <begin position="2"/>
        <end position="31"/>
    </location>
</feature>
<feature type="domain" description="4Fe-4S ferredoxin-type 2" evidence="2">
    <location>
        <begin position="39"/>
        <end position="68"/>
    </location>
</feature>
<feature type="binding site" evidence="2">
    <location>
        <position position="11"/>
    </location>
    <ligand>
        <name>[4Fe-4S] cluster</name>
        <dbReference type="ChEBI" id="CHEBI:49883"/>
        <label>1</label>
    </ligand>
</feature>
<feature type="binding site" evidence="2">
    <location>
        <position position="14"/>
    </location>
    <ligand>
        <name>[4Fe-4S] cluster</name>
        <dbReference type="ChEBI" id="CHEBI:49883"/>
        <label>1</label>
    </ligand>
</feature>
<feature type="binding site" evidence="2">
    <location>
        <position position="17"/>
    </location>
    <ligand>
        <name>[4Fe-4S] cluster</name>
        <dbReference type="ChEBI" id="CHEBI:49883"/>
        <label>1</label>
    </ligand>
</feature>
<feature type="binding site" evidence="2">
    <location>
        <position position="21"/>
    </location>
    <ligand>
        <name>[4Fe-4S] cluster</name>
        <dbReference type="ChEBI" id="CHEBI:49883"/>
        <label>2</label>
    </ligand>
</feature>
<feature type="binding site" evidence="2">
    <location>
        <position position="48"/>
    </location>
    <ligand>
        <name>[4Fe-4S] cluster</name>
        <dbReference type="ChEBI" id="CHEBI:49883"/>
        <label>2</label>
    </ligand>
</feature>
<feature type="binding site" evidence="2">
    <location>
        <position position="51"/>
    </location>
    <ligand>
        <name>[4Fe-4S] cluster</name>
        <dbReference type="ChEBI" id="CHEBI:49883"/>
        <label>2</label>
    </ligand>
</feature>
<feature type="binding site" evidence="2">
    <location>
        <position position="54"/>
    </location>
    <ligand>
        <name>[4Fe-4S] cluster</name>
        <dbReference type="ChEBI" id="CHEBI:49883"/>
        <label>2</label>
    </ligand>
</feature>
<feature type="binding site" evidence="2">
    <location>
        <position position="58"/>
    </location>
    <ligand>
        <name>[4Fe-4S] cluster</name>
        <dbReference type="ChEBI" id="CHEBI:49883"/>
        <label>1</label>
    </ligand>
</feature>
<gene>
    <name evidence="2" type="primary">psaC</name>
</gene>
<protein>
    <recommendedName>
        <fullName evidence="2">Photosystem I iron-sulfur center</fullName>
        <ecNumber evidence="2">1.97.1.12</ecNumber>
    </recommendedName>
    <alternativeName>
        <fullName evidence="2">9 kDa polypeptide</fullName>
    </alternativeName>
    <alternativeName>
        <fullName evidence="2">PSI-C</fullName>
    </alternativeName>
    <alternativeName>
        <fullName evidence="2">Photosystem I subunit VII</fullName>
    </alternativeName>
    <alternativeName>
        <fullName evidence="2">PsaC</fullName>
    </alternativeName>
</protein>
<sequence length="81" mass="9038">MSHSVKIYDTCIGCTQCVRACPTDVLEMIPWDGCKAKQIASAPRTEDCVGCKRCESACPTDFLSVRVYLWHETTRSMGLAY</sequence>
<organism>
    <name type="scientific">Eucalyptus globulus subsp. globulus</name>
    <name type="common">Tasmanian blue gum</name>
    <dbReference type="NCBI Taxonomy" id="71271"/>
    <lineage>
        <taxon>Eukaryota</taxon>
        <taxon>Viridiplantae</taxon>
        <taxon>Streptophyta</taxon>
        <taxon>Embryophyta</taxon>
        <taxon>Tracheophyta</taxon>
        <taxon>Spermatophyta</taxon>
        <taxon>Magnoliopsida</taxon>
        <taxon>eudicotyledons</taxon>
        <taxon>Gunneridae</taxon>
        <taxon>Pentapetalae</taxon>
        <taxon>rosids</taxon>
        <taxon>malvids</taxon>
        <taxon>Myrtales</taxon>
        <taxon>Myrtaceae</taxon>
        <taxon>Myrtoideae</taxon>
        <taxon>Eucalypteae</taxon>
        <taxon>Eucalyptus</taxon>
    </lineage>
</organism>
<proteinExistence type="inferred from homology"/>
<accession>Q49KU7</accession>